<sequence length="206" mass="24004">MVSVRKRKMARSSVRKNTRRLKDRQAKINIHSNPIIAANWDKSLTLQQNYKRLGLRAKLGTMVGGQEKPVIKASQKQEEQHVPVSEIENTTDPSKIPEGEARLIRDPETNEVTQVIYGTMKKKSTEDTPEVSTVVKQLEETAQKNAKIKKERKPSEQESQWLQKLYEKYGDDYEKMKWDKKLNVYQQSAGDLRRRITQWKKLNLIV</sequence>
<keyword id="KW-0539">Nucleus</keyword>
<keyword id="KW-1185">Reference proteome</keyword>
<keyword id="KW-0687">Ribonucleoprotein</keyword>
<keyword id="KW-0690">Ribosome biogenesis</keyword>
<keyword id="KW-0698">rRNA processing</keyword>
<organism>
    <name type="scientific">Meyerozyma guilliermondii (strain ATCC 6260 / CBS 566 / DSM 6381 / JCM 1539 / NBRC 10279 / NRRL Y-324)</name>
    <name type="common">Yeast</name>
    <name type="synonym">Candida guilliermondii</name>
    <dbReference type="NCBI Taxonomy" id="294746"/>
    <lineage>
        <taxon>Eukaryota</taxon>
        <taxon>Fungi</taxon>
        <taxon>Dikarya</taxon>
        <taxon>Ascomycota</taxon>
        <taxon>Saccharomycotina</taxon>
        <taxon>Pichiomycetes</taxon>
        <taxon>Debaryomycetaceae</taxon>
        <taxon>Meyerozyma</taxon>
    </lineage>
</organism>
<dbReference type="EMBL" id="CH408156">
    <property type="protein sequence ID" value="EDK38034.2"/>
    <property type="molecule type" value="Genomic_DNA"/>
</dbReference>
<dbReference type="RefSeq" id="XP_001486461.1">
    <property type="nucleotide sequence ID" value="XM_001486411.1"/>
</dbReference>
<dbReference type="SMR" id="A5DFT1"/>
<dbReference type="FunCoup" id="A5DFT1">
    <property type="interactions" value="293"/>
</dbReference>
<dbReference type="STRING" id="294746.A5DFT1"/>
<dbReference type="GeneID" id="5128442"/>
<dbReference type="KEGG" id="pgu:PGUG_02132"/>
<dbReference type="VEuPathDB" id="FungiDB:PGUG_02132"/>
<dbReference type="eggNOG" id="KOG4771">
    <property type="taxonomic scope" value="Eukaryota"/>
</dbReference>
<dbReference type="HOGENOM" id="CLU_078857_0_0_1"/>
<dbReference type="InParanoid" id="A5DFT1"/>
<dbReference type="OMA" id="MQQTEAD"/>
<dbReference type="OrthoDB" id="285729at2759"/>
<dbReference type="Proteomes" id="UP000001997">
    <property type="component" value="Unassembled WGS sequence"/>
</dbReference>
<dbReference type="GO" id="GO:0005730">
    <property type="term" value="C:nucleolus"/>
    <property type="evidence" value="ECO:0007669"/>
    <property type="project" value="UniProtKB-SubCell"/>
</dbReference>
<dbReference type="GO" id="GO:0030687">
    <property type="term" value="C:preribosome, large subunit precursor"/>
    <property type="evidence" value="ECO:0007669"/>
    <property type="project" value="EnsemblFungi"/>
</dbReference>
<dbReference type="GO" id="GO:0042273">
    <property type="term" value="P:ribosomal large subunit biogenesis"/>
    <property type="evidence" value="ECO:0007669"/>
    <property type="project" value="EnsemblFungi"/>
</dbReference>
<dbReference type="GO" id="GO:0006364">
    <property type="term" value="P:rRNA processing"/>
    <property type="evidence" value="ECO:0007669"/>
    <property type="project" value="UniProtKB-KW"/>
</dbReference>
<dbReference type="InterPro" id="IPR019002">
    <property type="entry name" value="Ribosome_biogenesis_Nop16"/>
</dbReference>
<dbReference type="PANTHER" id="PTHR13243">
    <property type="entry name" value="HSPC111 PROTEIN-RELATED"/>
    <property type="match status" value="1"/>
</dbReference>
<dbReference type="PANTHER" id="PTHR13243:SF1">
    <property type="entry name" value="NUCLEOLAR PROTEIN 16"/>
    <property type="match status" value="1"/>
</dbReference>
<dbReference type="Pfam" id="PF09420">
    <property type="entry name" value="Nop16"/>
    <property type="match status" value="1"/>
</dbReference>
<accession>A5DFT1</accession>
<evidence type="ECO:0000250" key="1"/>
<evidence type="ECO:0000256" key="2">
    <source>
        <dbReference type="SAM" id="MobiDB-lite"/>
    </source>
</evidence>
<evidence type="ECO:0000305" key="3"/>
<protein>
    <recommendedName>
        <fullName>Nucleolar protein 16</fullName>
    </recommendedName>
</protein>
<reference key="1">
    <citation type="journal article" date="2009" name="Nature">
        <title>Evolution of pathogenicity and sexual reproduction in eight Candida genomes.</title>
        <authorList>
            <person name="Butler G."/>
            <person name="Rasmussen M.D."/>
            <person name="Lin M.F."/>
            <person name="Santos M.A.S."/>
            <person name="Sakthikumar S."/>
            <person name="Munro C.A."/>
            <person name="Rheinbay E."/>
            <person name="Grabherr M."/>
            <person name="Forche A."/>
            <person name="Reedy J.L."/>
            <person name="Agrafioti I."/>
            <person name="Arnaud M.B."/>
            <person name="Bates S."/>
            <person name="Brown A.J.P."/>
            <person name="Brunke S."/>
            <person name="Costanzo M.C."/>
            <person name="Fitzpatrick D.A."/>
            <person name="de Groot P.W.J."/>
            <person name="Harris D."/>
            <person name="Hoyer L.L."/>
            <person name="Hube B."/>
            <person name="Klis F.M."/>
            <person name="Kodira C."/>
            <person name="Lennard N."/>
            <person name="Logue M.E."/>
            <person name="Martin R."/>
            <person name="Neiman A.M."/>
            <person name="Nikolaou E."/>
            <person name="Quail M.A."/>
            <person name="Quinn J."/>
            <person name="Santos M.C."/>
            <person name="Schmitzberger F.F."/>
            <person name="Sherlock G."/>
            <person name="Shah P."/>
            <person name="Silverstein K.A.T."/>
            <person name="Skrzypek M.S."/>
            <person name="Soll D."/>
            <person name="Staggs R."/>
            <person name="Stansfield I."/>
            <person name="Stumpf M.P.H."/>
            <person name="Sudbery P.E."/>
            <person name="Srikantha T."/>
            <person name="Zeng Q."/>
            <person name="Berman J."/>
            <person name="Berriman M."/>
            <person name="Heitman J."/>
            <person name="Gow N.A.R."/>
            <person name="Lorenz M.C."/>
            <person name="Birren B.W."/>
            <person name="Kellis M."/>
            <person name="Cuomo C.A."/>
        </authorList>
    </citation>
    <scope>NUCLEOTIDE SEQUENCE [LARGE SCALE GENOMIC DNA]</scope>
    <source>
        <strain>ATCC 6260 / CBS 566 / DSM 6381 / JCM 1539 / NBRC 10279 / NRRL Y-324</strain>
    </source>
</reference>
<comment type="function">
    <text evidence="1">Involved in the biogenesis of the 60S ribosomal subunit.</text>
</comment>
<comment type="subunit">
    <text evidence="1">Component of the pre-66S ribosomal particle.</text>
</comment>
<comment type="subcellular location">
    <subcellularLocation>
        <location evidence="1">Nucleus</location>
        <location evidence="1">Nucleolus</location>
    </subcellularLocation>
</comment>
<comment type="similarity">
    <text evidence="3">Belongs to the NOP16 family.</text>
</comment>
<feature type="chain" id="PRO_0000320383" description="Nucleolar protein 16">
    <location>
        <begin position="1"/>
        <end position="206"/>
    </location>
</feature>
<feature type="region of interest" description="Disordered" evidence="2">
    <location>
        <begin position="1"/>
        <end position="20"/>
    </location>
</feature>
<feature type="region of interest" description="Disordered" evidence="2">
    <location>
        <begin position="69"/>
        <end position="97"/>
    </location>
</feature>
<proteinExistence type="inferred from homology"/>
<name>NOP16_PICGU</name>
<gene>
    <name type="primary">NOP16</name>
    <name type="ORF">PGUG_02132</name>
</gene>